<organism>
    <name type="scientific">Homo sapiens</name>
    <name type="common">Human</name>
    <dbReference type="NCBI Taxonomy" id="9606"/>
    <lineage>
        <taxon>Eukaryota</taxon>
        <taxon>Metazoa</taxon>
        <taxon>Chordata</taxon>
        <taxon>Craniata</taxon>
        <taxon>Vertebrata</taxon>
        <taxon>Euteleostomi</taxon>
        <taxon>Mammalia</taxon>
        <taxon>Eutheria</taxon>
        <taxon>Euarchontoglires</taxon>
        <taxon>Primates</taxon>
        <taxon>Haplorrhini</taxon>
        <taxon>Catarrhini</taxon>
        <taxon>Hominidae</taxon>
        <taxon>Homo</taxon>
    </lineage>
</organism>
<protein>
    <recommendedName>
        <fullName evidence="11">Potassium voltage-gated channel subfamily B member 2</fullName>
    </recommendedName>
    <alternativeName>
        <fullName>Voltage-gated potassium channel subunit Kv2.2</fullName>
    </alternativeName>
</protein>
<sequence>MAEKAPPGLNRKTSRSTLSLPPEPVDIIRSKTCSRRVKINVGGLNHEVLWRTLDRLPRTRLGKLRDCNTHESLLEVCDDYNLNENEYFFDRHPGAFTSILNFYRTGKLHMMEEMCALSFGQELDYWGIDEIYLESCCQARYHQKKEQMNEELRREAETMREREGEEFDNTCCPDKRKKLWDLLEKPNSSVAAKILAIVSILFIVLSTIALSLNTLPELQETDEFGQLNDNRQLAHVEAVCIAWFTMEYLLRFLSSPNKWKFFKGPLNVIDLLAILPYYVTIFLTESNKSVLQFQNVRRVVQIFRIMRILRILKLARHSTGLQSLGFTLRRSYNELGLLILFLAMGIMIFSSLVFFAEKDEDATKFTSIPASFWWATITMTTVGYGDIYPKTLLGKIVGGLCCIAGVLVIALPIPIIVNNFSEFYKEQKRQEKAIKRREALERAKRNGSIVSMNLKDAFARSMELIDVAVEKAGESANTKDSADDNHLSPSRWKWARKALSETSSNKSFENKYQEVSQKDSHEQLNNTSSSSPQHLSAQKLEMLYNEITKTQPHSHPNPDCQEKPERPSAYEEEIEMEEVVCPQEQLAVAQTEVIVDMKSTSSIDSFTSCATDFTETERSPLPPPSASHLQMKFPTDLPGTEEHQRARGPPFLTLSREKGPAARDGTLEYAPVDITVNLDASGSQCGLHSPLQSDNATDSPKSSLKGSNPLKSRSLKVNFKENRGSAPQTPPSTARPLPVTTADFSLTTPQHISTILLEETPSQGDRPLLGTEVSAPCQGPSKGLSPRFPKQKLFPFSSRERRSFTEIDTGDDEDFLELPGAREEKQVDSSPNCFADKPSDGRDPLREEGSVGSSSPQDTGHNCRQDIYHAVSEVKKDSSQEGCKMENHLFAPEIHSNPGDTGYCPTRETSM</sequence>
<name>KCNB2_HUMAN</name>
<proteinExistence type="evidence at protein level"/>
<reference key="1">
    <citation type="submission" date="2001-11" db="EMBL/GenBank/DDBJ databases">
        <title>Cloning and characterization of two novel gamma Kv subunits.</title>
        <authorList>
            <person name="Preisig-Mueller R."/>
            <person name="Derst C."/>
            <person name="Schnitzler M.M."/>
            <person name="Daut J."/>
        </authorList>
    </citation>
    <scope>NUCLEOTIDE SEQUENCE [MRNA]</scope>
    <source>
        <tissue>Brain</tissue>
    </source>
</reference>
<reference key="2">
    <citation type="submission" date="2001-01" db="EMBL/GenBank/DDBJ databases">
        <authorList>
            <person name="Rae J.L."/>
        </authorList>
    </citation>
    <scope>NUCLEOTIDE SEQUENCE [MRNA]</scope>
</reference>
<reference key="3">
    <citation type="journal article" date="1998" name="Am. J. Physiol.">
        <title>Molecular identification of a component of delayed rectifier current in gastrointestinal smooth muscles.</title>
        <authorList>
            <person name="Schmalz F."/>
            <person name="Kinsella J."/>
            <person name="Koh S.D."/>
            <person name="Vogalis F."/>
            <person name="Schneider A."/>
            <person name="Flynn E.R."/>
            <person name="Kenyon J.L."/>
            <person name="Horowitz B."/>
        </authorList>
    </citation>
    <scope>NUCLEOTIDE SEQUENCE [MRNA] OF 1-811</scope>
</reference>
<reference key="4">
    <citation type="journal article" date="1999" name="Ann. N. Y. Acad. Sci.">
        <title>Molecular diversity of K+ channels.</title>
        <authorList>
            <person name="Coetzee W.A."/>
            <person name="Amarillo Y."/>
            <person name="Chiu J."/>
            <person name="Chow A."/>
            <person name="Lau D."/>
            <person name="McCormack T."/>
            <person name="Moreno H."/>
            <person name="Nadal M.S."/>
            <person name="Ozaita A."/>
            <person name="Pountney D."/>
            <person name="Saganich M."/>
            <person name="Vega-Saenz de Miera E."/>
            <person name="Rudy B."/>
        </authorList>
    </citation>
    <scope>REVIEW</scope>
</reference>
<reference key="5">
    <citation type="journal article" date="2020" name="EMBO J.">
        <title>FFAT motif phosphorylation controls formation and lipid transfer function of inter-organelle contacts.</title>
        <authorList>
            <person name="Di Mattia T."/>
            <person name="Martinet A."/>
            <person name="Ikhlef S."/>
            <person name="McEwen A.G."/>
            <person name="Nomine Y."/>
            <person name="Wendling C."/>
            <person name="Poussin-Courmontagne P."/>
            <person name="Voilquin L."/>
            <person name="Eberling P."/>
            <person name="Ruffenach F."/>
            <person name="Cavarelli J."/>
            <person name="Slee J."/>
            <person name="Levine T.P."/>
            <person name="Drin G."/>
            <person name="Tomasetto C."/>
            <person name="Alpy F."/>
        </authorList>
    </citation>
    <scope>INTERACTION WITH VAPA AND VAPB</scope>
    <scope>FFAT MOTIF</scope>
    <scope>PHOSPHORYLATION AT SER-608</scope>
    <scope>DOMAIN</scope>
</reference>
<reference key="6">
    <citation type="journal article" date="2006" name="Science">
        <title>The consensus coding sequences of human breast and colorectal cancers.</title>
        <authorList>
            <person name="Sjoeblom T."/>
            <person name="Jones S."/>
            <person name="Wood L.D."/>
            <person name="Parsons D.W."/>
            <person name="Lin J."/>
            <person name="Barber T.D."/>
            <person name="Mandelker D."/>
            <person name="Leary R.J."/>
            <person name="Ptak J."/>
            <person name="Silliman N."/>
            <person name="Szabo S."/>
            <person name="Buckhaults P."/>
            <person name="Farrell C."/>
            <person name="Meeh P."/>
            <person name="Markowitz S.D."/>
            <person name="Willis J."/>
            <person name="Dawson D."/>
            <person name="Willson J.K.V."/>
            <person name="Gazdar A.F."/>
            <person name="Hartigan J."/>
            <person name="Wu L."/>
            <person name="Liu C."/>
            <person name="Parmigiani G."/>
            <person name="Park B.H."/>
            <person name="Bachman K.E."/>
            <person name="Papadopoulos N."/>
            <person name="Vogelstein B."/>
            <person name="Kinzler K.W."/>
            <person name="Velculescu V.E."/>
        </authorList>
    </citation>
    <scope>VARIANT [LARGE SCALE ANALYSIS] ILE-450</scope>
</reference>
<keyword id="KW-1003">Cell membrane</keyword>
<keyword id="KW-0966">Cell projection</keyword>
<keyword id="KW-0325">Glycoprotein</keyword>
<keyword id="KW-0407">Ion channel</keyword>
<keyword id="KW-0406">Ion transport</keyword>
<keyword id="KW-0472">Membrane</keyword>
<keyword id="KW-0597">Phosphoprotein</keyword>
<keyword id="KW-0630">Potassium</keyword>
<keyword id="KW-0631">Potassium channel</keyword>
<keyword id="KW-0633">Potassium transport</keyword>
<keyword id="KW-1267">Proteomics identification</keyword>
<keyword id="KW-1185">Reference proteome</keyword>
<keyword id="KW-0812">Transmembrane</keyword>
<keyword id="KW-1133">Transmembrane helix</keyword>
<keyword id="KW-0813">Transport</keyword>
<keyword id="KW-0851">Voltage-gated channel</keyword>
<feature type="chain" id="PRO_0000054048" description="Potassium voltage-gated channel subfamily B member 2">
    <location>
        <begin position="1"/>
        <end position="911"/>
    </location>
</feature>
<feature type="topological domain" description="Cytoplasmic" evidence="2">
    <location>
        <begin position="1"/>
        <end position="190"/>
    </location>
</feature>
<feature type="transmembrane region" description="Helical; Name=Segment S1" evidence="2">
    <location>
        <begin position="191"/>
        <end position="212"/>
    </location>
</feature>
<feature type="topological domain" description="Extracellular" evidence="2">
    <location>
        <begin position="213"/>
        <end position="232"/>
    </location>
</feature>
<feature type="transmembrane region" description="Helical; Name=Segment S2" evidence="2">
    <location>
        <begin position="233"/>
        <end position="254"/>
    </location>
</feature>
<feature type="topological domain" description="Cytoplasmic" evidence="2">
    <location>
        <begin position="255"/>
        <end position="265"/>
    </location>
</feature>
<feature type="transmembrane region" description="Helical; Name=Segment S3" evidence="2">
    <location>
        <begin position="266"/>
        <end position="284"/>
    </location>
</feature>
<feature type="topological domain" description="Extracellular" evidence="2">
    <location>
        <begin position="285"/>
        <end position="296"/>
    </location>
</feature>
<feature type="transmembrane region" description="Helical; Voltage-sensor; Name=Segment S4" evidence="2">
    <location>
        <begin position="297"/>
        <end position="317"/>
    </location>
</feature>
<feature type="topological domain" description="Cytoplasmic" evidence="2">
    <location>
        <begin position="318"/>
        <end position="332"/>
    </location>
</feature>
<feature type="transmembrane region" description="Helical; Name=Segment S5" evidence="2">
    <location>
        <begin position="333"/>
        <end position="354"/>
    </location>
</feature>
<feature type="topological domain" description="Extracellular" evidence="2">
    <location>
        <begin position="355"/>
        <end position="368"/>
    </location>
</feature>
<feature type="intramembrane region" description="Helical; Name=Pore helix" evidence="2">
    <location>
        <begin position="369"/>
        <end position="380"/>
    </location>
</feature>
<feature type="intramembrane region" evidence="2">
    <location>
        <begin position="381"/>
        <end position="388"/>
    </location>
</feature>
<feature type="topological domain" description="Extracellular" evidence="2">
    <location>
        <begin position="389"/>
        <end position="395"/>
    </location>
</feature>
<feature type="transmembrane region" description="Helical; Name=Segment S6" evidence="2">
    <location>
        <begin position="396"/>
        <end position="424"/>
    </location>
</feature>
<feature type="topological domain" description="Cytoplasmic" evidence="2">
    <location>
        <begin position="425"/>
        <end position="911"/>
    </location>
</feature>
<feature type="region of interest" description="Disordered" evidence="6">
    <location>
        <begin position="1"/>
        <end position="22"/>
    </location>
</feature>
<feature type="region of interest" description="Disordered" evidence="6">
    <location>
        <begin position="503"/>
        <end position="534"/>
    </location>
</feature>
<feature type="region of interest" description="Disordered" evidence="6">
    <location>
        <begin position="549"/>
        <end position="571"/>
    </location>
</feature>
<feature type="region of interest" description="Disordered" evidence="6">
    <location>
        <begin position="637"/>
        <end position="665"/>
    </location>
</feature>
<feature type="region of interest" description="Disordered" evidence="6">
    <location>
        <begin position="685"/>
        <end position="739"/>
    </location>
</feature>
<feature type="region of interest" description="Disordered" evidence="6">
    <location>
        <begin position="760"/>
        <end position="865"/>
    </location>
</feature>
<feature type="region of interest" description="Disordered" evidence="6">
    <location>
        <begin position="892"/>
        <end position="911"/>
    </location>
</feature>
<feature type="short sequence motif" description="Selectivity filter" evidence="2">
    <location>
        <begin position="381"/>
        <end position="386"/>
    </location>
</feature>
<feature type="short sequence motif" description="FFAT" evidence="8">
    <location>
        <begin position="605"/>
        <end position="611"/>
    </location>
</feature>
<feature type="compositionally biased region" description="Basic and acidic residues" evidence="6">
    <location>
        <begin position="508"/>
        <end position="522"/>
    </location>
</feature>
<feature type="compositionally biased region" description="Polar residues" evidence="6">
    <location>
        <begin position="523"/>
        <end position="534"/>
    </location>
</feature>
<feature type="compositionally biased region" description="Basic and acidic residues" evidence="6">
    <location>
        <begin position="560"/>
        <end position="569"/>
    </location>
</feature>
<feature type="compositionally biased region" description="Polar residues" evidence="6">
    <location>
        <begin position="685"/>
        <end position="711"/>
    </location>
</feature>
<feature type="compositionally biased region" description="Basic and acidic residues" evidence="6">
    <location>
        <begin position="837"/>
        <end position="849"/>
    </location>
</feature>
<feature type="compositionally biased region" description="Polar residues" evidence="6">
    <location>
        <begin position="851"/>
        <end position="860"/>
    </location>
</feature>
<feature type="modified residue" description="Phosphoserine" evidence="3">
    <location>
        <position position="448"/>
    </location>
</feature>
<feature type="modified residue" description="Phosphoserine" evidence="8">
    <location>
        <position position="608"/>
    </location>
</feature>
<feature type="glycosylation site" description="N-linked (GlcNAc...) asparagine" evidence="5">
    <location>
        <position position="287"/>
    </location>
</feature>
<feature type="sequence variant" id="VAR_035774" description="In a colorectal cancer sample; somatic mutation; dbSNP:rs770305852." evidence="7">
    <original>V</original>
    <variation>I</variation>
    <location>
        <position position="450"/>
    </location>
</feature>
<feature type="sequence variant" id="VAR_034050" description="In dbSNP:rs16938507.">
    <original>E</original>
    <variation>G</variation>
    <location>
        <position position="657"/>
    </location>
</feature>
<feature type="sequence conflict" description="In Ref. 1; AAP46292." evidence="9" ref="1">
    <original>ER</original>
    <variation>DG</variation>
    <location>
        <begin position="161"/>
        <end position="162"/>
    </location>
</feature>
<feature type="sequence conflict" description="In Ref. 1; AAP46292." evidence="9" ref="1">
    <original>S</original>
    <variation>F</variation>
    <location>
        <position position="528"/>
    </location>
</feature>
<accession>Q92953</accession>
<accession>Q7Z7D0</accession>
<accession>Q9BXD3</accession>
<evidence type="ECO:0000250" key="1">
    <source>
        <dbReference type="UniProtKB" id="A6H8H5"/>
    </source>
</evidence>
<evidence type="ECO:0000250" key="2">
    <source>
        <dbReference type="UniProtKB" id="P63142"/>
    </source>
</evidence>
<evidence type="ECO:0000250" key="3">
    <source>
        <dbReference type="UniProtKB" id="Q63099"/>
    </source>
</evidence>
<evidence type="ECO:0000250" key="4">
    <source>
        <dbReference type="UniProtKB" id="Q95167"/>
    </source>
</evidence>
<evidence type="ECO:0000255" key="5"/>
<evidence type="ECO:0000256" key="6">
    <source>
        <dbReference type="SAM" id="MobiDB-lite"/>
    </source>
</evidence>
<evidence type="ECO:0000269" key="7">
    <source>
    </source>
</evidence>
<evidence type="ECO:0000269" key="8">
    <source>
    </source>
</evidence>
<evidence type="ECO:0000305" key="9"/>
<evidence type="ECO:0000305" key="10">
    <source>
    </source>
</evidence>
<evidence type="ECO:0000312" key="11">
    <source>
        <dbReference type="HGNC" id="HGNC:6232"/>
    </source>
</evidence>
<comment type="function">
    <text evidence="1 3">Voltage-gated potassium channel that mediates transmembrane potassium transport in excitable membranes, primarily in the brain and smooth muscle cells. Channels open or close in response to the voltage difference across the membrane, letting potassium ions pass in accordance with their electrochemical gradient. Homotetrameric channels mediate a delayed-rectifier voltage-dependent outward potassium current that display rapid activation and slow inactivation in response to membrane depolarization. Can form functional homotetrameric and heterotetrameric channels that contain variable proportions of KCNB1; channel properties depend on the type of alpha subunits that are part of the channel. Can also form functional heterotetrameric channels with other alpha subunits that are non-conducting when expressed alone, such as KCNS1 and KCNS2, creating a functionally diverse range of channel complexes. In vivo, membranes probably contain a mixture of heteromeric potassium channel complexes, making it difficult to assign currents observed in intact tissues to any particular potassium channel family member. Contributes to the delayed-rectifier voltage-gated potassium current in cortical pyramidal neurons and smooth muscle cells.</text>
</comment>
<comment type="catalytic activity">
    <reaction evidence="3">
        <text>K(+)(in) = K(+)(out)</text>
        <dbReference type="Rhea" id="RHEA:29463"/>
        <dbReference type="ChEBI" id="CHEBI:29103"/>
    </reaction>
</comment>
<comment type="activity regulation">
    <text evidence="3 4 10">Inhibited by quinine at micromolar levels. Modestly sensitive to millimolar levels of tetraethylammonium (TEA) and 4-aminopyridine (4-AP).</text>
</comment>
<comment type="biophysicochemical properties">
    <kinetics>
        <text evidence="10">Homotetrameric channels expressed in xenopus oocytes or in mammalian non-neuronal cells display delayed-rectifier voltage-dependent potassium currents which are activated during membrane depolarization, i.e within a risetime of about 20 msec. After that, inactivate very slowly. Their activation requires low threshold potentials of about -20 to -30 mV, with a midpoint activation at about 10 mV. For inactivation, the voltage at half-maximal amplitude is about -30 mV. Channels have an unitary conductance of about 14 pS. The voltage-dependence of activation and inactivation and other channel characteristics vary depending on the experimental conditions, the expression system and post-translational modifications.</text>
    </kinetics>
</comment>
<comment type="subunit">
    <text evidence="3 8">Homotetramer or heterotetramer with KCNB1. Heterotetramer with KCNS1 and KCNS2. Interacts (via phosphorylated FFAT motif) with VAPA and VAPB (PubMed:33124732).</text>
</comment>
<comment type="subcellular location">
    <subcellularLocation>
        <location evidence="3">Cell membrane</location>
        <topology evidence="3">Multi-pass membrane protein</topology>
    </subcellularLocation>
    <subcellularLocation>
        <location evidence="3">Perikaryon</location>
    </subcellularLocation>
    <subcellularLocation>
        <location evidence="3">Cell projection</location>
        <location evidence="3">Dendrite</location>
    </subcellularLocation>
    <text evidence="3">Localized uniformly throughout cell bodies and dendrites. Colocalizes with KCNB1 to high-density somatodendritic clusters on cortical pyramidal neurons.</text>
</comment>
<comment type="domain">
    <text evidence="2">The transmembrane segment S4 functions as a voltage-sensor and is characterized by a series of positively charged amino acids at every third position. Channel opening and closing is effected by a conformation change that affects the position and orientation of the voltage-sensor paddle formed by S3 and S4 within the membrane. A transmembrane electric field that is positive inside would push the positively charged S4 segment outwards, thereby opening the pore, while a field that is negative inside would pull the S4 segment inwards and close the pore. Changes in the position and orientation of S4 are then transmitted to the activation gate formed by the inner helix bundle via the S4-S5 linker region.</text>
</comment>
<comment type="domain">
    <text evidence="8">The FFAT motif is involved in the interaction with VAPA and VAPB and its phosphorylation regulates these interactions.</text>
</comment>
<comment type="PTM">
    <text evidence="3 8">Phosphorylated. Phosphorylation at Ser-608 of the FFAT motif activates interaction with MOSPD2, VAPA and VAPB (PubMed:33124732).</text>
</comment>
<comment type="similarity">
    <text evidence="9">Belongs to the potassium channel family. B (Shab) (TC 1.A.1.2) subfamily. Kv2.2/KCNB2 sub-subfamily.</text>
</comment>
<comment type="sequence caution" evidence="9">
    <conflict type="frameshift">
        <sequence resource="EMBL-CDS" id="AAB08433"/>
    </conflict>
</comment>
<gene>
    <name evidence="11" type="primary">KCNB2</name>
</gene>
<dbReference type="EMBL" id="AF450111">
    <property type="protein sequence ID" value="AAP46292.1"/>
    <property type="molecule type" value="mRNA"/>
</dbReference>
<dbReference type="EMBL" id="AF338730">
    <property type="protein sequence ID" value="AAK16585.1"/>
    <property type="molecule type" value="mRNA"/>
</dbReference>
<dbReference type="EMBL" id="U69962">
    <property type="protein sequence ID" value="AAB08433.1"/>
    <property type="status" value="ALT_FRAME"/>
    <property type="molecule type" value="mRNA"/>
</dbReference>
<dbReference type="CCDS" id="CCDS6209.1"/>
<dbReference type="RefSeq" id="NP_004761.2">
    <property type="nucleotide sequence ID" value="NM_004770.2"/>
</dbReference>
<dbReference type="SMR" id="Q92953"/>
<dbReference type="BioGRID" id="114724">
    <property type="interactions" value="60"/>
</dbReference>
<dbReference type="CORUM" id="Q92953"/>
<dbReference type="FunCoup" id="Q92953">
    <property type="interactions" value="96"/>
</dbReference>
<dbReference type="IntAct" id="Q92953">
    <property type="interactions" value="13"/>
</dbReference>
<dbReference type="MINT" id="Q92953"/>
<dbReference type="STRING" id="9606.ENSP00000430846"/>
<dbReference type="BindingDB" id="Q92953"/>
<dbReference type="ChEMBL" id="CHEMBL2321618"/>
<dbReference type="DrugBank" id="DB06637">
    <property type="generic name" value="Dalfampridine"/>
</dbReference>
<dbReference type="DrugBank" id="DB00228">
    <property type="generic name" value="Enflurane"/>
</dbReference>
<dbReference type="DrugBank" id="DB01110">
    <property type="generic name" value="Miconazole"/>
</dbReference>
<dbReference type="DrugBank" id="DB01069">
    <property type="generic name" value="Promethazine"/>
</dbReference>
<dbReference type="DrugCentral" id="Q92953"/>
<dbReference type="GuidetoPHARMACOLOGY" id="547"/>
<dbReference type="TCDB" id="1.A.1.2.25">
    <property type="family name" value="the voltage-gated ion channel (vic) superfamily"/>
</dbReference>
<dbReference type="GlyCosmos" id="Q92953">
    <property type="glycosylation" value="1 site, No reported glycans"/>
</dbReference>
<dbReference type="GlyGen" id="Q92953">
    <property type="glycosylation" value="2 sites, 1 O-linked glycan (1 site)"/>
</dbReference>
<dbReference type="iPTMnet" id="Q92953"/>
<dbReference type="PhosphoSitePlus" id="Q92953"/>
<dbReference type="BioMuta" id="KCNB2"/>
<dbReference type="DMDM" id="24418855"/>
<dbReference type="MassIVE" id="Q92953"/>
<dbReference type="PaxDb" id="9606-ENSP00000430846"/>
<dbReference type="PeptideAtlas" id="Q92953"/>
<dbReference type="ProteomicsDB" id="75623"/>
<dbReference type="ABCD" id="Q92953">
    <property type="antibodies" value="2 sequenced antibodies"/>
</dbReference>
<dbReference type="Antibodypedia" id="63986">
    <property type="antibodies" value="132 antibodies from 25 providers"/>
</dbReference>
<dbReference type="DNASU" id="9312"/>
<dbReference type="Ensembl" id="ENST00000523207.2">
    <property type="protein sequence ID" value="ENSP00000430846.1"/>
    <property type="gene ID" value="ENSG00000182674.6"/>
</dbReference>
<dbReference type="GeneID" id="9312"/>
<dbReference type="KEGG" id="hsa:9312"/>
<dbReference type="MANE-Select" id="ENST00000523207.2">
    <property type="protein sequence ID" value="ENSP00000430846.1"/>
    <property type="RefSeq nucleotide sequence ID" value="NM_004770.3"/>
    <property type="RefSeq protein sequence ID" value="NP_004761.2"/>
</dbReference>
<dbReference type="UCSC" id="uc003xzb.3">
    <property type="organism name" value="human"/>
</dbReference>
<dbReference type="AGR" id="HGNC:6232"/>
<dbReference type="CTD" id="9312"/>
<dbReference type="DisGeNET" id="9312"/>
<dbReference type="GeneCards" id="KCNB2"/>
<dbReference type="HGNC" id="HGNC:6232">
    <property type="gene designation" value="KCNB2"/>
</dbReference>
<dbReference type="HPA" id="ENSG00000182674">
    <property type="expression patterns" value="Tissue enhanced (brain, lymphoid tissue, retina)"/>
</dbReference>
<dbReference type="MalaCards" id="KCNB2"/>
<dbReference type="MIM" id="607738">
    <property type="type" value="gene"/>
</dbReference>
<dbReference type="neXtProt" id="NX_Q92953"/>
<dbReference type="OpenTargets" id="ENSG00000182674"/>
<dbReference type="PharmGKB" id="PA30025"/>
<dbReference type="VEuPathDB" id="HostDB:ENSG00000182674"/>
<dbReference type="eggNOG" id="KOG3713">
    <property type="taxonomic scope" value="Eukaryota"/>
</dbReference>
<dbReference type="GeneTree" id="ENSGT00940000161902"/>
<dbReference type="HOGENOM" id="CLU_011722_2_0_1"/>
<dbReference type="InParanoid" id="Q92953"/>
<dbReference type="OMA" id="AHENHIG"/>
<dbReference type="OrthoDB" id="296522at2759"/>
<dbReference type="PAN-GO" id="Q92953">
    <property type="GO annotations" value="6 GO annotations based on evolutionary models"/>
</dbReference>
<dbReference type="PhylomeDB" id="Q92953"/>
<dbReference type="TreeFam" id="TF313103"/>
<dbReference type="PathwayCommons" id="Q92953"/>
<dbReference type="Reactome" id="R-HSA-1296072">
    <property type="pathway name" value="Voltage gated Potassium channels"/>
</dbReference>
<dbReference type="SignaLink" id="Q92953"/>
<dbReference type="SIGNOR" id="Q92953"/>
<dbReference type="BioGRID-ORCS" id="9312">
    <property type="hits" value="7 hits in 1146 CRISPR screens"/>
</dbReference>
<dbReference type="ChiTaRS" id="KCNB2">
    <property type="organism name" value="human"/>
</dbReference>
<dbReference type="GeneWiki" id="KCNB2"/>
<dbReference type="GenomeRNAi" id="9312"/>
<dbReference type="Pharos" id="Q92953">
    <property type="development level" value="Tclin"/>
</dbReference>
<dbReference type="PRO" id="PR:Q92953"/>
<dbReference type="Proteomes" id="UP000005640">
    <property type="component" value="Chromosome 8"/>
</dbReference>
<dbReference type="RNAct" id="Q92953">
    <property type="molecule type" value="protein"/>
</dbReference>
<dbReference type="Bgee" id="ENSG00000182674">
    <property type="expression patterns" value="Expressed in buccal mucosa cell and 76 other cell types or tissues"/>
</dbReference>
<dbReference type="GO" id="GO:0030425">
    <property type="term" value="C:dendrite"/>
    <property type="evidence" value="ECO:0000250"/>
    <property type="project" value="UniProtKB"/>
</dbReference>
<dbReference type="GO" id="GO:0016020">
    <property type="term" value="C:membrane"/>
    <property type="evidence" value="ECO:0000318"/>
    <property type="project" value="GO_Central"/>
</dbReference>
<dbReference type="GO" id="GO:0043025">
    <property type="term" value="C:neuronal cell body"/>
    <property type="evidence" value="ECO:0000318"/>
    <property type="project" value="GO_Central"/>
</dbReference>
<dbReference type="GO" id="GO:0032809">
    <property type="term" value="C:neuronal cell body membrane"/>
    <property type="evidence" value="ECO:0000250"/>
    <property type="project" value="UniProtKB"/>
</dbReference>
<dbReference type="GO" id="GO:0043204">
    <property type="term" value="C:perikaryon"/>
    <property type="evidence" value="ECO:0007669"/>
    <property type="project" value="UniProtKB-SubCell"/>
</dbReference>
<dbReference type="GO" id="GO:0005886">
    <property type="term" value="C:plasma membrane"/>
    <property type="evidence" value="ECO:0000250"/>
    <property type="project" value="UniProtKB"/>
</dbReference>
<dbReference type="GO" id="GO:0008076">
    <property type="term" value="C:voltage-gated potassium channel complex"/>
    <property type="evidence" value="ECO:0000250"/>
    <property type="project" value="UniProtKB"/>
</dbReference>
<dbReference type="GO" id="GO:0005251">
    <property type="term" value="F:delayed rectifier potassium channel activity"/>
    <property type="evidence" value="ECO:0000250"/>
    <property type="project" value="UniProtKB"/>
</dbReference>
<dbReference type="GO" id="GO:0015459">
    <property type="term" value="F:potassium channel regulator activity"/>
    <property type="evidence" value="ECO:0000318"/>
    <property type="project" value="GO_Central"/>
</dbReference>
<dbReference type="GO" id="GO:0046982">
    <property type="term" value="F:protein heterodimerization activity"/>
    <property type="evidence" value="ECO:0000250"/>
    <property type="project" value="UniProtKB"/>
</dbReference>
<dbReference type="GO" id="GO:0001508">
    <property type="term" value="P:action potential"/>
    <property type="evidence" value="ECO:0000318"/>
    <property type="project" value="GO_Central"/>
</dbReference>
<dbReference type="GO" id="GO:0071805">
    <property type="term" value="P:potassium ion transmembrane transport"/>
    <property type="evidence" value="ECO:0000250"/>
    <property type="project" value="UniProtKB"/>
</dbReference>
<dbReference type="GO" id="GO:0006813">
    <property type="term" value="P:potassium ion transport"/>
    <property type="evidence" value="ECO:0000250"/>
    <property type="project" value="UniProtKB"/>
</dbReference>
<dbReference type="GO" id="GO:0051260">
    <property type="term" value="P:protein homooligomerization"/>
    <property type="evidence" value="ECO:0007669"/>
    <property type="project" value="InterPro"/>
</dbReference>
<dbReference type="GO" id="GO:0072659">
    <property type="term" value="P:protein localization to plasma membrane"/>
    <property type="evidence" value="ECO:0000250"/>
    <property type="project" value="UniProtKB"/>
</dbReference>
<dbReference type="GO" id="GO:0006940">
    <property type="term" value="P:regulation of smooth muscle contraction"/>
    <property type="evidence" value="ECO:0000304"/>
    <property type="project" value="ProtInc"/>
</dbReference>
<dbReference type="CDD" id="cd18412">
    <property type="entry name" value="BTB_POZ_KCNB2"/>
    <property type="match status" value="1"/>
</dbReference>
<dbReference type="FunFam" id="1.10.287.70:FF:000034">
    <property type="entry name" value="Potassium voltage-gated channel subfamily B member"/>
    <property type="match status" value="1"/>
</dbReference>
<dbReference type="FunFam" id="1.20.120.350:FF:000018">
    <property type="entry name" value="Potassium voltage-gated channel subfamily B member"/>
    <property type="match status" value="1"/>
</dbReference>
<dbReference type="FunFam" id="3.30.710.10:FF:000010">
    <property type="entry name" value="Potassium voltage-gated channel subfamily B member"/>
    <property type="match status" value="1"/>
</dbReference>
<dbReference type="Gene3D" id="1.10.287.70">
    <property type="match status" value="1"/>
</dbReference>
<dbReference type="Gene3D" id="3.30.710.10">
    <property type="entry name" value="Potassium Channel Kv1.1, Chain A"/>
    <property type="match status" value="1"/>
</dbReference>
<dbReference type="Gene3D" id="1.20.120.350">
    <property type="entry name" value="Voltage-gated potassium channels. Chain C"/>
    <property type="match status" value="1"/>
</dbReference>
<dbReference type="InterPro" id="IPR000210">
    <property type="entry name" value="BTB/POZ_dom"/>
</dbReference>
<dbReference type="InterPro" id="IPR005821">
    <property type="entry name" value="Ion_trans_dom"/>
</dbReference>
<dbReference type="InterPro" id="IPR003968">
    <property type="entry name" value="K_chnl_volt-dep_Kv"/>
</dbReference>
<dbReference type="InterPro" id="IPR003973">
    <property type="entry name" value="K_chnl_volt-dep_Kv2"/>
</dbReference>
<dbReference type="InterPro" id="IPR005826">
    <property type="entry name" value="K_chnl_volt-dep_Kv2.2"/>
</dbReference>
<dbReference type="InterPro" id="IPR011333">
    <property type="entry name" value="SKP1/BTB/POZ_sf"/>
</dbReference>
<dbReference type="InterPro" id="IPR003131">
    <property type="entry name" value="T1-type_BTB"/>
</dbReference>
<dbReference type="InterPro" id="IPR028325">
    <property type="entry name" value="VG_K_chnl"/>
</dbReference>
<dbReference type="InterPro" id="IPR027359">
    <property type="entry name" value="Volt_channel_dom_sf"/>
</dbReference>
<dbReference type="PANTHER" id="PTHR11537:SF134">
    <property type="entry name" value="POTASSIUM VOLTAGE-GATED CHANNEL SUBFAMILY B MEMBER 2"/>
    <property type="match status" value="1"/>
</dbReference>
<dbReference type="PANTHER" id="PTHR11537">
    <property type="entry name" value="VOLTAGE-GATED POTASSIUM CHANNEL"/>
    <property type="match status" value="1"/>
</dbReference>
<dbReference type="Pfam" id="PF02214">
    <property type="entry name" value="BTB_2"/>
    <property type="match status" value="1"/>
</dbReference>
<dbReference type="Pfam" id="PF00520">
    <property type="entry name" value="Ion_trans"/>
    <property type="match status" value="1"/>
</dbReference>
<dbReference type="Pfam" id="PF03521">
    <property type="entry name" value="Kv2channel"/>
    <property type="match status" value="1"/>
</dbReference>
<dbReference type="PRINTS" id="PR00169">
    <property type="entry name" value="KCHANNEL"/>
</dbReference>
<dbReference type="PRINTS" id="PR01515">
    <property type="entry name" value="KV22CHANNEL"/>
</dbReference>
<dbReference type="PRINTS" id="PR01491">
    <property type="entry name" value="KVCHANNEL"/>
</dbReference>
<dbReference type="PRINTS" id="PR01495">
    <property type="entry name" value="SHABCHANNEL"/>
</dbReference>
<dbReference type="SMART" id="SM00225">
    <property type="entry name" value="BTB"/>
    <property type="match status" value="1"/>
</dbReference>
<dbReference type="SUPFAM" id="SSF54695">
    <property type="entry name" value="POZ domain"/>
    <property type="match status" value="1"/>
</dbReference>
<dbReference type="SUPFAM" id="SSF81324">
    <property type="entry name" value="Voltage-gated potassium channels"/>
    <property type="match status" value="1"/>
</dbReference>